<organism>
    <name type="scientific">Neurospora crassa (strain ATCC 24698 / 74-OR23-1A / CBS 708.71 / DSM 1257 / FGSC 987)</name>
    <dbReference type="NCBI Taxonomy" id="367110"/>
    <lineage>
        <taxon>Eukaryota</taxon>
        <taxon>Fungi</taxon>
        <taxon>Dikarya</taxon>
        <taxon>Ascomycota</taxon>
        <taxon>Pezizomycotina</taxon>
        <taxon>Sordariomycetes</taxon>
        <taxon>Sordariomycetidae</taxon>
        <taxon>Sordariales</taxon>
        <taxon>Sordariaceae</taxon>
        <taxon>Neurospora</taxon>
    </lineage>
</organism>
<comment type="function">
    <text>Involved in the replication of mitochondrial DNA.</text>
</comment>
<comment type="catalytic activity">
    <reaction>
        <text>DNA(n) + a 2'-deoxyribonucleoside 5'-triphosphate = DNA(n+1) + diphosphate</text>
        <dbReference type="Rhea" id="RHEA:22508"/>
        <dbReference type="Rhea" id="RHEA-COMP:17339"/>
        <dbReference type="Rhea" id="RHEA-COMP:17340"/>
        <dbReference type="ChEBI" id="CHEBI:33019"/>
        <dbReference type="ChEBI" id="CHEBI:61560"/>
        <dbReference type="ChEBI" id="CHEBI:173112"/>
        <dbReference type="EC" id="2.7.7.7"/>
    </reaction>
</comment>
<comment type="cofactor">
    <cofactor evidence="1">
        <name>Mg(2+)</name>
        <dbReference type="ChEBI" id="CHEBI:18420"/>
    </cofactor>
</comment>
<comment type="subcellular location">
    <subcellularLocation>
        <location evidence="1">Mitochondrion</location>
    </subcellularLocation>
</comment>
<comment type="miscellaneous">
    <text>In eukaryotes there are five DNA polymerases: alpha, beta, gamma, delta, and epsilon which are responsible for different reactions of DNA synthesis.</text>
</comment>
<comment type="similarity">
    <text evidence="4">Belongs to the DNA polymerase type-A family.</text>
</comment>
<comment type="sequence caution" evidence="4">
    <conflict type="frameshift">
        <sequence resource="EMBL-CDS" id="AAD21034"/>
    </conflict>
</comment>
<dbReference type="EC" id="2.7.7.7"/>
<dbReference type="EMBL" id="AF111068">
    <property type="protein sequence ID" value="AAD21034.1"/>
    <property type="status" value="ALT_FRAME"/>
    <property type="molecule type" value="Genomic_DNA"/>
</dbReference>
<dbReference type="EMBL" id="CM002238">
    <property type="protein sequence ID" value="EAA28511.2"/>
    <property type="molecule type" value="Genomic_DNA"/>
</dbReference>
<dbReference type="RefSeq" id="XP_957747.2">
    <property type="nucleotide sequence ID" value="XM_952654.3"/>
</dbReference>
<dbReference type="SMR" id="Q9Y767"/>
<dbReference type="FunCoup" id="Q9Y767">
    <property type="interactions" value="737"/>
</dbReference>
<dbReference type="STRING" id="367110.Q9Y767"/>
<dbReference type="PaxDb" id="5141-EFNCRP00000000196"/>
<dbReference type="EnsemblFungi" id="EAA28511">
    <property type="protein sequence ID" value="EAA28511"/>
    <property type="gene ID" value="NCU00276"/>
</dbReference>
<dbReference type="GeneID" id="3873917"/>
<dbReference type="KEGG" id="ncr:NCU00276"/>
<dbReference type="VEuPathDB" id="FungiDB:NCU00276"/>
<dbReference type="HOGENOM" id="CLU_001524_1_0_1"/>
<dbReference type="InParanoid" id="Q9Y767"/>
<dbReference type="OrthoDB" id="5588663at2759"/>
<dbReference type="Proteomes" id="UP000001805">
    <property type="component" value="Chromosome 3, Linkage Group III"/>
</dbReference>
<dbReference type="GO" id="GO:0005760">
    <property type="term" value="C:gamma DNA polymerase complex"/>
    <property type="evidence" value="ECO:0007669"/>
    <property type="project" value="InterPro"/>
</dbReference>
<dbReference type="GO" id="GO:0005739">
    <property type="term" value="C:mitochondrion"/>
    <property type="evidence" value="ECO:0000318"/>
    <property type="project" value="GO_Central"/>
</dbReference>
<dbReference type="GO" id="GO:0008408">
    <property type="term" value="F:3'-5' exonuclease activity"/>
    <property type="evidence" value="ECO:0000318"/>
    <property type="project" value="GO_Central"/>
</dbReference>
<dbReference type="GO" id="GO:0003677">
    <property type="term" value="F:DNA binding"/>
    <property type="evidence" value="ECO:0007669"/>
    <property type="project" value="UniProtKB-KW"/>
</dbReference>
<dbReference type="GO" id="GO:0003887">
    <property type="term" value="F:DNA-directed DNA polymerase activity"/>
    <property type="evidence" value="ECO:0000318"/>
    <property type="project" value="GO_Central"/>
</dbReference>
<dbReference type="GO" id="GO:0006264">
    <property type="term" value="P:mitochondrial DNA replication"/>
    <property type="evidence" value="ECO:0000318"/>
    <property type="project" value="GO_Central"/>
</dbReference>
<dbReference type="CDD" id="cd08641">
    <property type="entry name" value="DNA_pol_gammaA"/>
    <property type="match status" value="1"/>
</dbReference>
<dbReference type="FunFam" id="1.10.150.20:FF:000035">
    <property type="entry name" value="DNA polymerase gamma, mitochondrial"/>
    <property type="match status" value="1"/>
</dbReference>
<dbReference type="FunFam" id="3.30.420.390:FF:000003">
    <property type="entry name" value="DNA polymerase gamma, mitochondrial"/>
    <property type="match status" value="1"/>
</dbReference>
<dbReference type="FunFam" id="3.30.420.390:FF:000006">
    <property type="entry name" value="DNA polymerase gamma, mitochondrial"/>
    <property type="match status" value="1"/>
</dbReference>
<dbReference type="Gene3D" id="3.30.420.390">
    <property type="match status" value="2"/>
</dbReference>
<dbReference type="Gene3D" id="3.30.70.370">
    <property type="match status" value="1"/>
</dbReference>
<dbReference type="Gene3D" id="1.10.150.20">
    <property type="entry name" value="5' to 3' exonuclease, C-terminal subdomain"/>
    <property type="match status" value="1"/>
</dbReference>
<dbReference type="InterPro" id="IPR019760">
    <property type="entry name" value="DNA-dir_DNA_pol_A_CS"/>
</dbReference>
<dbReference type="InterPro" id="IPR002297">
    <property type="entry name" value="DNA-dir_DNA_pol_A_mt"/>
</dbReference>
<dbReference type="InterPro" id="IPR001098">
    <property type="entry name" value="DNA-dir_DNA_pol_A_palm_dom"/>
</dbReference>
<dbReference type="InterPro" id="IPR043502">
    <property type="entry name" value="DNA/RNA_pol_sf"/>
</dbReference>
<dbReference type="InterPro" id="IPR041336">
    <property type="entry name" value="DNApol_Exo"/>
</dbReference>
<dbReference type="InterPro" id="IPR047580">
    <property type="entry name" value="POLG_palm_dom"/>
</dbReference>
<dbReference type="InterPro" id="IPR012337">
    <property type="entry name" value="RNaseH-like_sf"/>
</dbReference>
<dbReference type="PANTHER" id="PTHR10267">
    <property type="entry name" value="DNA POLYMERASE SUBUNIT GAMMA-1"/>
    <property type="match status" value="1"/>
</dbReference>
<dbReference type="PANTHER" id="PTHR10267:SF0">
    <property type="entry name" value="DNA POLYMERASE SUBUNIT GAMMA-1"/>
    <property type="match status" value="1"/>
</dbReference>
<dbReference type="Pfam" id="PF00476">
    <property type="entry name" value="DNA_pol_A"/>
    <property type="match status" value="1"/>
</dbReference>
<dbReference type="Pfam" id="PF18136">
    <property type="entry name" value="DNApol_Exo"/>
    <property type="match status" value="1"/>
</dbReference>
<dbReference type="PRINTS" id="PR00867">
    <property type="entry name" value="DNAPOLG"/>
</dbReference>
<dbReference type="SMART" id="SM00482">
    <property type="entry name" value="POLAc"/>
    <property type="match status" value="1"/>
</dbReference>
<dbReference type="SUPFAM" id="SSF56672">
    <property type="entry name" value="DNA/RNA polymerases"/>
    <property type="match status" value="1"/>
</dbReference>
<dbReference type="SUPFAM" id="SSF53098">
    <property type="entry name" value="Ribonuclease H-like"/>
    <property type="match status" value="1"/>
</dbReference>
<dbReference type="PROSITE" id="PS00447">
    <property type="entry name" value="DNA_POLYMERASE_A"/>
    <property type="match status" value="1"/>
</dbReference>
<protein>
    <recommendedName>
        <fullName>DNA polymerase gamma, mitochondrial</fullName>
        <ecNumber>2.7.7.7</ecNumber>
    </recommendedName>
    <alternativeName>
        <fullName>Mitochondrial DNA polymerase catalytic subunit</fullName>
    </alternativeName>
</protein>
<gene>
    <name type="primary">mip-1</name>
    <name type="synonym">pol-g</name>
    <name type="ORF">NCU00276</name>
</gene>
<proteinExistence type="inferred from homology"/>
<evidence type="ECO:0000250" key="1"/>
<evidence type="ECO:0000255" key="2"/>
<evidence type="ECO:0000256" key="3">
    <source>
        <dbReference type="SAM" id="MobiDB-lite"/>
    </source>
</evidence>
<evidence type="ECO:0000305" key="4"/>
<feature type="transit peptide" description="Mitochondrion" evidence="2">
    <location>
        <begin position="1"/>
        <end position="41"/>
    </location>
</feature>
<feature type="chain" id="PRO_0000101275" description="DNA polymerase gamma, mitochondrial">
    <location>
        <begin position="42"/>
        <end position="1456"/>
    </location>
</feature>
<feature type="region of interest" description="Disordered" evidence="3">
    <location>
        <begin position="1200"/>
        <end position="1266"/>
    </location>
</feature>
<feature type="region of interest" description="Disordered" evidence="3">
    <location>
        <begin position="1308"/>
        <end position="1443"/>
    </location>
</feature>
<feature type="compositionally biased region" description="Low complexity" evidence="3">
    <location>
        <begin position="1204"/>
        <end position="1239"/>
    </location>
</feature>
<feature type="compositionally biased region" description="Pro residues" evidence="3">
    <location>
        <begin position="1315"/>
        <end position="1325"/>
    </location>
</feature>
<feature type="compositionally biased region" description="Low complexity" evidence="3">
    <location>
        <begin position="1346"/>
        <end position="1371"/>
    </location>
</feature>
<feature type="compositionally biased region" description="Low complexity" evidence="3">
    <location>
        <begin position="1411"/>
        <end position="1428"/>
    </location>
</feature>
<reference key="1">
    <citation type="submission" date="1998-12" db="EMBL/GenBank/DDBJ databases">
        <title>DNA polymerase gamma of Neurospora crassa.</title>
        <authorList>
            <person name="Ko T."/>
            <person name="Seidel-Rogol B.L."/>
            <person name="Bertrand H."/>
        </authorList>
    </citation>
    <scope>NUCLEOTIDE SEQUENCE [GENOMIC DNA]</scope>
    <source>
        <strain>ATCC 24698 / 74-OR23-1A / CBS 708.71 / DSM 1257 / FGSC 987</strain>
    </source>
</reference>
<reference key="2">
    <citation type="journal article" date="2003" name="Nature">
        <title>The genome sequence of the filamentous fungus Neurospora crassa.</title>
        <authorList>
            <person name="Galagan J.E."/>
            <person name="Calvo S.E."/>
            <person name="Borkovich K.A."/>
            <person name="Selker E.U."/>
            <person name="Read N.D."/>
            <person name="Jaffe D.B."/>
            <person name="FitzHugh W."/>
            <person name="Ma L.-J."/>
            <person name="Smirnov S."/>
            <person name="Purcell S."/>
            <person name="Rehman B."/>
            <person name="Elkins T."/>
            <person name="Engels R."/>
            <person name="Wang S."/>
            <person name="Nielsen C.B."/>
            <person name="Butler J."/>
            <person name="Endrizzi M."/>
            <person name="Qui D."/>
            <person name="Ianakiev P."/>
            <person name="Bell-Pedersen D."/>
            <person name="Nelson M.A."/>
            <person name="Werner-Washburne M."/>
            <person name="Selitrennikoff C.P."/>
            <person name="Kinsey J.A."/>
            <person name="Braun E.L."/>
            <person name="Zelter A."/>
            <person name="Schulte U."/>
            <person name="Kothe G.O."/>
            <person name="Jedd G."/>
            <person name="Mewes H.-W."/>
            <person name="Staben C."/>
            <person name="Marcotte E."/>
            <person name="Greenberg D."/>
            <person name="Roy A."/>
            <person name="Foley K."/>
            <person name="Naylor J."/>
            <person name="Stange-Thomann N."/>
            <person name="Barrett R."/>
            <person name="Gnerre S."/>
            <person name="Kamal M."/>
            <person name="Kamvysselis M."/>
            <person name="Mauceli E.W."/>
            <person name="Bielke C."/>
            <person name="Rudd S."/>
            <person name="Frishman D."/>
            <person name="Krystofova S."/>
            <person name="Rasmussen C."/>
            <person name="Metzenberg R.L."/>
            <person name="Perkins D.D."/>
            <person name="Kroken S."/>
            <person name="Cogoni C."/>
            <person name="Macino G."/>
            <person name="Catcheside D.E.A."/>
            <person name="Li W."/>
            <person name="Pratt R.J."/>
            <person name="Osmani S.A."/>
            <person name="DeSouza C.P.C."/>
            <person name="Glass N.L."/>
            <person name="Orbach M.J."/>
            <person name="Berglund J.A."/>
            <person name="Voelker R."/>
            <person name="Yarden O."/>
            <person name="Plamann M."/>
            <person name="Seiler S."/>
            <person name="Dunlap J.C."/>
            <person name="Radford A."/>
            <person name="Aramayo R."/>
            <person name="Natvig D.O."/>
            <person name="Alex L.A."/>
            <person name="Mannhaupt G."/>
            <person name="Ebbole D.J."/>
            <person name="Freitag M."/>
            <person name="Paulsen I."/>
            <person name="Sachs M.S."/>
            <person name="Lander E.S."/>
            <person name="Nusbaum C."/>
            <person name="Birren B.W."/>
        </authorList>
    </citation>
    <scope>NUCLEOTIDE SEQUENCE [LARGE SCALE GENOMIC DNA]</scope>
    <source>
        <strain>ATCC 24698 / 74-OR23-1A / CBS 708.71 / DSM 1257 / FGSC 987</strain>
    </source>
</reference>
<accession>Q9Y767</accession>
<accession>Q7RV83</accession>
<sequence>MLTPVRCRTVPNATVATAARVLRRANLFSRYPRQLGHLRWDSTIAQVLERKGLGVPSTARHNEIGVQQLSEHLYKQLFPRGNTDPPAPELIELAKDHLARHDLLGKTTDKTPPIAFQLPALVGDTLDEHFHKLGVDAAEPFLTHAKQFADAHLPPKPTSWVRRSGWTKYNRDGTTENDVLPQGNMMCFDVEVMYKDNPYAVMACAGTPDAWYAWLSPWLLGETENKAQLVPMGDPTVDRIIVGHNIGYDRAKILEEYDLKQTRNFFLDTMSLHVAVNGMCSQQRPTWMKHKKARELREKAEHESASVELQEVLQGGSLTAEEADLWVDKSSINSLRDVAQFHLNVKIDKDIRDVFAETDRNVILNQLDDLLTYCAADVQVTHQVYQVVFPNFLGVCPHPVSFAALRHLASVILPVNKTWDTYIETAEATYLQMLHGVQERLFTLMERTLDYKADPEKYLSDPWLSQLDWSGQEIKMAKPKKKGDVERPALNQKLPGYPQWYKDLFVKVPKELSGLDEPDKEQENRKARHEFINLTVRSRIAPLLLKLSWEGYPLFWSDQFGWTFQVPREKAETFIQRQMTPVQFEDPDVDDRLRMDVDHKYFKLPHKDGPNARCVNPMAKGYLPYFEKGILSSEYPYAKEALEMNASCSYWISARERIKNQMVVYEDQLPPSQRFVNKDADSNTPIGGFVLPQVIPMGTITRRAVERTWLTASNAKKNRVGSELKAMVRAPPGYVFVGADVDSEELWIASVVGDATFKLHGGNAIGFMTLEGTKSQGTDLHSRTASILGITRNDAKVFNYGRIYGAGLKFASQLLRQFNPSLTEAETTAIATKLYDATKGAKTNRKSLYKRPFWRGGTESFVFNMLEEFAEQERPRTPVLGAGITEALMSRWVSKGGFLTSRINWAIQSSGVDYLHLLIIAMDYLTRRFNLACRLAITVHDEIRYLAEEPDKYRVAMALQIANLWTRVMFAQQVGIQDLPQSCAFFSAVDIDHVLRKEVDMDCITPSNPIPIAHGESIDIFQILEKGDDAKLDDSIVPQSQYAPRLENIPYTPRVPVMQRLRERAEAGDHQAFLRFIRAQITNSDEELKRIIAETRYSDPYGAFSLASNGRVSGNPHQRHAAVHASTKTAAAPSKPSIASRFDSVSQASRIKSVAAGSDEPTIRATKAQGKAMAKASGTKLAASTKDTVLNVTIKKKVAAPEMAAVPSTSSESKSKASATTSTTTTENATASPSSSSNVDAKKTTSKTKPTHKKETEGEPFPSLDDPVIAARLEAVSKTSPGTRASVAAKLDALASFSMRAAAAAEAAVTTTTTPEPPTNPPPVAPKAKEPTTTMAEKVLKPTAVPKNPTPTLTPTTKKSNPTSTPTTPKPVGRPRTTPILPYTAPKKKLPSSAFSKEQKEPMSVSEAVWTASVGGRATTTTATATATGDEKKKTTTTPSWKPVKESLFGRGVYIP</sequence>
<keyword id="KW-0235">DNA replication</keyword>
<keyword id="KW-0238">DNA-binding</keyword>
<keyword id="KW-0239">DNA-directed DNA polymerase</keyword>
<keyword id="KW-0460">Magnesium</keyword>
<keyword id="KW-0496">Mitochondrion</keyword>
<keyword id="KW-0548">Nucleotidyltransferase</keyword>
<keyword id="KW-1185">Reference proteome</keyword>
<keyword id="KW-0808">Transferase</keyword>
<keyword id="KW-0809">Transit peptide</keyword>
<name>DPOG_NEUCR</name>